<reference key="1">
    <citation type="journal article" date="2004" name="Nat. Biotechnol.">
        <title>The genome sequence of the anaerobic, sulfate-reducing bacterium Desulfovibrio vulgaris Hildenborough.</title>
        <authorList>
            <person name="Heidelberg J.F."/>
            <person name="Seshadri R."/>
            <person name="Haveman S.A."/>
            <person name="Hemme C.L."/>
            <person name="Paulsen I.T."/>
            <person name="Kolonay J.F."/>
            <person name="Eisen J.A."/>
            <person name="Ward N.L."/>
            <person name="Methe B.A."/>
            <person name="Brinkac L.M."/>
            <person name="Daugherty S.C."/>
            <person name="DeBoy R.T."/>
            <person name="Dodson R.J."/>
            <person name="Durkin A.S."/>
            <person name="Madupu R."/>
            <person name="Nelson W.C."/>
            <person name="Sullivan S.A."/>
            <person name="Fouts D.E."/>
            <person name="Haft D.H."/>
            <person name="Selengut J."/>
            <person name="Peterson J.D."/>
            <person name="Davidsen T.M."/>
            <person name="Zafar N."/>
            <person name="Zhou L."/>
            <person name="Radune D."/>
            <person name="Dimitrov G."/>
            <person name="Hance M."/>
            <person name="Tran K."/>
            <person name="Khouri H.M."/>
            <person name="Gill J."/>
            <person name="Utterback T.R."/>
            <person name="Feldblyum T.V."/>
            <person name="Wall J.D."/>
            <person name="Voordouw G."/>
            <person name="Fraser C.M."/>
        </authorList>
    </citation>
    <scope>NUCLEOTIDE SEQUENCE [LARGE SCALE GENOMIC DNA]</scope>
    <source>
        <strain>ATCC 29579 / DSM 644 / CCUG 34227 / NCIMB 8303 / VKM B-1760 / Hildenborough</strain>
    </source>
</reference>
<evidence type="ECO:0000255" key="1">
    <source>
        <dbReference type="HAMAP-Rule" id="MF_01077"/>
    </source>
</evidence>
<dbReference type="EMBL" id="AE017285">
    <property type="protein sequence ID" value="AAS94993.1"/>
    <property type="molecule type" value="Genomic_DNA"/>
</dbReference>
<dbReference type="RefSeq" id="WP_010937817.1">
    <property type="nucleotide sequence ID" value="NC_002937.3"/>
</dbReference>
<dbReference type="RefSeq" id="YP_009734.1">
    <property type="nucleotide sequence ID" value="NC_002937.3"/>
</dbReference>
<dbReference type="SMR" id="Q72EQ8"/>
<dbReference type="STRING" id="882.DVU_0511"/>
<dbReference type="PaxDb" id="882-DVU_0511"/>
<dbReference type="EnsemblBacteria" id="AAS94993">
    <property type="protein sequence ID" value="AAS94993"/>
    <property type="gene ID" value="DVU_0511"/>
</dbReference>
<dbReference type="KEGG" id="dvu:DVU_0511"/>
<dbReference type="PATRIC" id="fig|882.5.peg.488"/>
<dbReference type="eggNOG" id="COG0779">
    <property type="taxonomic scope" value="Bacteria"/>
</dbReference>
<dbReference type="HOGENOM" id="CLU_070525_2_2_7"/>
<dbReference type="OrthoDB" id="9805006at2"/>
<dbReference type="PhylomeDB" id="Q72EQ8"/>
<dbReference type="Proteomes" id="UP000002194">
    <property type="component" value="Chromosome"/>
</dbReference>
<dbReference type="GO" id="GO:0005829">
    <property type="term" value="C:cytosol"/>
    <property type="evidence" value="ECO:0007669"/>
    <property type="project" value="TreeGrafter"/>
</dbReference>
<dbReference type="GO" id="GO:0000028">
    <property type="term" value="P:ribosomal small subunit assembly"/>
    <property type="evidence" value="ECO:0007669"/>
    <property type="project" value="TreeGrafter"/>
</dbReference>
<dbReference type="GO" id="GO:0006412">
    <property type="term" value="P:translation"/>
    <property type="evidence" value="ECO:0007669"/>
    <property type="project" value="TreeGrafter"/>
</dbReference>
<dbReference type="CDD" id="cd01734">
    <property type="entry name" value="YlxS_C"/>
    <property type="match status" value="1"/>
</dbReference>
<dbReference type="FunFam" id="3.30.300.70:FF:000001">
    <property type="entry name" value="Ribosome maturation factor RimP"/>
    <property type="match status" value="1"/>
</dbReference>
<dbReference type="Gene3D" id="3.30.300.70">
    <property type="entry name" value="RimP-like superfamily, N-terminal"/>
    <property type="match status" value="1"/>
</dbReference>
<dbReference type="HAMAP" id="MF_01077">
    <property type="entry name" value="RimP"/>
    <property type="match status" value="1"/>
</dbReference>
<dbReference type="InterPro" id="IPR003728">
    <property type="entry name" value="Ribosome_maturation_RimP"/>
</dbReference>
<dbReference type="InterPro" id="IPR028998">
    <property type="entry name" value="RimP_C"/>
</dbReference>
<dbReference type="InterPro" id="IPR036847">
    <property type="entry name" value="RimP_C_sf"/>
</dbReference>
<dbReference type="InterPro" id="IPR028989">
    <property type="entry name" value="RimP_N"/>
</dbReference>
<dbReference type="InterPro" id="IPR035956">
    <property type="entry name" value="RimP_N_sf"/>
</dbReference>
<dbReference type="NCBIfam" id="NF011225">
    <property type="entry name" value="PRK14632.1"/>
    <property type="match status" value="1"/>
</dbReference>
<dbReference type="PANTHER" id="PTHR33867">
    <property type="entry name" value="RIBOSOME MATURATION FACTOR RIMP"/>
    <property type="match status" value="1"/>
</dbReference>
<dbReference type="PANTHER" id="PTHR33867:SF1">
    <property type="entry name" value="RIBOSOME MATURATION FACTOR RIMP"/>
    <property type="match status" value="1"/>
</dbReference>
<dbReference type="Pfam" id="PF02576">
    <property type="entry name" value="RimP_N"/>
    <property type="match status" value="1"/>
</dbReference>
<dbReference type="SUPFAM" id="SSF74942">
    <property type="entry name" value="YhbC-like, C-terminal domain"/>
    <property type="match status" value="1"/>
</dbReference>
<dbReference type="SUPFAM" id="SSF75420">
    <property type="entry name" value="YhbC-like, N-terminal domain"/>
    <property type="match status" value="1"/>
</dbReference>
<protein>
    <recommendedName>
        <fullName evidence="1">Ribosome maturation factor RimP</fullName>
    </recommendedName>
</protein>
<proteinExistence type="inferred from homology"/>
<accession>Q72EQ8</accession>
<gene>
    <name evidence="1" type="primary">rimP</name>
    <name type="ordered locus">DVU_0511</name>
</gene>
<keyword id="KW-0963">Cytoplasm</keyword>
<keyword id="KW-1185">Reference proteome</keyword>
<keyword id="KW-0690">Ribosome biogenesis</keyword>
<sequence length="172" mass="18887">MTKQALDATIADMAGPFLASLGLELWGIELSYGGRTVVRLFVDGPEGVTIDQCAEVSRHVGLALEVEDVISSAYVLEVSSPGLERPFFRAEQMSPYVGRQIELTLIDPTPEWPGRRKFRGELLAVEGDTVVLRPEGAPAPEAEEAVLRTSWQGVRKANLIHVFPEPGHKPRR</sequence>
<feature type="chain" id="PRO_0000181868" description="Ribosome maturation factor RimP">
    <location>
        <begin position="1"/>
        <end position="172"/>
    </location>
</feature>
<comment type="function">
    <text evidence="1">Required for maturation of 30S ribosomal subunits.</text>
</comment>
<comment type="subcellular location">
    <subcellularLocation>
        <location evidence="1">Cytoplasm</location>
    </subcellularLocation>
</comment>
<comment type="similarity">
    <text evidence="1">Belongs to the RimP family.</text>
</comment>
<organism>
    <name type="scientific">Nitratidesulfovibrio vulgaris (strain ATCC 29579 / DSM 644 / CCUG 34227 / NCIMB 8303 / VKM B-1760 / Hildenborough)</name>
    <name type="common">Desulfovibrio vulgaris</name>
    <dbReference type="NCBI Taxonomy" id="882"/>
    <lineage>
        <taxon>Bacteria</taxon>
        <taxon>Pseudomonadati</taxon>
        <taxon>Thermodesulfobacteriota</taxon>
        <taxon>Desulfovibrionia</taxon>
        <taxon>Desulfovibrionales</taxon>
        <taxon>Desulfovibrionaceae</taxon>
        <taxon>Nitratidesulfovibrio</taxon>
    </lineage>
</organism>
<name>RIMP_NITV2</name>